<keyword id="KW-0049">Antioxidant</keyword>
<keyword id="KW-1015">Disulfide bond</keyword>
<keyword id="KW-0560">Oxidoreductase</keyword>
<keyword id="KW-0575">Peroxidase</keyword>
<keyword id="KW-0676">Redox-active center</keyword>
<keyword id="KW-1185">Reference proteome</keyword>
<sequence length="165" mass="16896">MAQITLRGNAINTVGELPAVGSPAPAFTLTGGDLGVISSDQFRGKSVLLNIFPSVDTPVCATSVRTFDERAAASGATVLCVSKDLPFAQKRFCGAEGTENVMPASAFRDSFGEDYGVTIADGPMAGLLARAIVVIGADGNVAYTELVPEIAQEPNYEAALAALGA</sequence>
<reference key="1">
    <citation type="journal article" date="2003" name="Proc. Natl. Acad. Sci. U.S.A.">
        <title>The complete genome sequence of Mycobacterium bovis.</title>
        <authorList>
            <person name="Garnier T."/>
            <person name="Eiglmeier K."/>
            <person name="Camus J.-C."/>
            <person name="Medina N."/>
            <person name="Mansoor H."/>
            <person name="Pryor M."/>
            <person name="Duthoy S."/>
            <person name="Grondin S."/>
            <person name="Lacroix C."/>
            <person name="Monsempe C."/>
            <person name="Simon S."/>
            <person name="Harris B."/>
            <person name="Atkin R."/>
            <person name="Doggett J."/>
            <person name="Mayes R."/>
            <person name="Keating L."/>
            <person name="Wheeler P.R."/>
            <person name="Parkhill J."/>
            <person name="Barrell B.G."/>
            <person name="Cole S.T."/>
            <person name="Gordon S.V."/>
            <person name="Hewinson R.G."/>
        </authorList>
    </citation>
    <scope>NUCLEOTIDE SEQUENCE [LARGE SCALE GENOMIC DNA]</scope>
    <source>
        <strain>ATCC BAA-935 / AF2122/97</strain>
    </source>
</reference>
<reference key="2">
    <citation type="journal article" date="2017" name="Genome Announc.">
        <title>Updated reference genome sequence and annotation of Mycobacterium bovis AF2122/97.</title>
        <authorList>
            <person name="Malone K.M."/>
            <person name="Farrell D."/>
            <person name="Stuber T.P."/>
            <person name="Schubert O.T."/>
            <person name="Aebersold R."/>
            <person name="Robbe-Austerman S."/>
            <person name="Gordon S.V."/>
        </authorList>
    </citation>
    <scope>NUCLEOTIDE SEQUENCE [LARGE SCALE GENOMIC DNA]</scope>
    <scope>GENOME REANNOTATION</scope>
    <source>
        <strain>ATCC BAA-935 / AF2122/97</strain>
    </source>
</reference>
<reference key="3">
    <citation type="journal article" date="2005" name="FEMS Microbiol. Lett.">
        <title>Thiol specific oxidative stress response in Mycobacteria.</title>
        <authorList>
            <person name="Dosanjh N.S."/>
            <person name="Rawat M."/>
            <person name="Chung J.-H."/>
            <person name="Av-Gay Y."/>
        </authorList>
    </citation>
    <scope>IDENTIFICATION BY MASS SPECTROMETRY</scope>
    <scope>INDUCTION</scope>
    <source>
        <strain>BCG / Pasteur</strain>
    </source>
</reference>
<organism>
    <name type="scientific">Mycobacterium bovis (strain ATCC BAA-935 / AF2122/97)</name>
    <dbReference type="NCBI Taxonomy" id="233413"/>
    <lineage>
        <taxon>Bacteria</taxon>
        <taxon>Bacillati</taxon>
        <taxon>Actinomycetota</taxon>
        <taxon>Actinomycetes</taxon>
        <taxon>Mycobacteriales</taxon>
        <taxon>Mycobacteriaceae</taxon>
        <taxon>Mycobacterium</taxon>
        <taxon>Mycobacterium tuberculosis complex</taxon>
    </lineage>
</organism>
<feature type="chain" id="PRO_0000187889" description="Thiol peroxidase">
    <location>
        <begin position="1"/>
        <end position="165"/>
    </location>
</feature>
<feature type="domain" description="Thioredoxin" evidence="1">
    <location>
        <begin position="18"/>
        <end position="165"/>
    </location>
</feature>
<feature type="active site" description="Cysteine sulfenic acid (-SOH) intermediate" evidence="1">
    <location>
        <position position="60"/>
    </location>
</feature>
<feature type="disulfide bond" description="Redox-active" evidence="1">
    <location>
        <begin position="60"/>
        <end position="93"/>
    </location>
</feature>
<gene>
    <name evidence="1" type="primary">tpx</name>
    <name type="ordered locus">BQ2027_MB1967</name>
</gene>
<evidence type="ECO:0000255" key="1">
    <source>
        <dbReference type="HAMAP-Rule" id="MF_00269"/>
    </source>
</evidence>
<evidence type="ECO:0000269" key="2">
    <source>
    </source>
</evidence>
<protein>
    <recommendedName>
        <fullName evidence="1">Thiol peroxidase</fullName>
        <shortName evidence="1">Tpx</shortName>
        <ecNumber evidence="1">1.11.1.24</ecNumber>
    </recommendedName>
    <alternativeName>
        <fullName evidence="1">Peroxiredoxin tpx</fullName>
        <shortName evidence="1">Prx</shortName>
    </alternativeName>
    <alternativeName>
        <fullName evidence="1">Thioredoxin peroxidase</fullName>
    </alternativeName>
    <alternativeName>
        <fullName evidence="1">Thioredoxin-dependent peroxiredoxin</fullName>
    </alternativeName>
</protein>
<comment type="function">
    <text evidence="1">Thiol-specific peroxidase that catalyzes the reduction of hydrogen peroxide and organic hydroperoxides to water and alcohols, respectively. Plays a role in cell protection against oxidative stress by detoxifying peroxides.</text>
</comment>
<comment type="catalytic activity">
    <reaction evidence="1">
        <text>a hydroperoxide + [thioredoxin]-dithiol = an alcohol + [thioredoxin]-disulfide + H2O</text>
        <dbReference type="Rhea" id="RHEA:62620"/>
        <dbReference type="Rhea" id="RHEA-COMP:10698"/>
        <dbReference type="Rhea" id="RHEA-COMP:10700"/>
        <dbReference type="ChEBI" id="CHEBI:15377"/>
        <dbReference type="ChEBI" id="CHEBI:29950"/>
        <dbReference type="ChEBI" id="CHEBI:30879"/>
        <dbReference type="ChEBI" id="CHEBI:35924"/>
        <dbReference type="ChEBI" id="CHEBI:50058"/>
        <dbReference type="EC" id="1.11.1.24"/>
    </reaction>
</comment>
<comment type="subunit">
    <text evidence="1">Homodimer.</text>
</comment>
<comment type="induction">
    <text evidence="2">Induced in response to the thiol oxidant diamide.</text>
</comment>
<comment type="miscellaneous">
    <text evidence="1">The active site is a conserved redox-active cysteine residue, the peroxidatic cysteine (C(P)), which makes the nucleophilic attack on the peroxide substrate. The peroxide oxidizes the C(P)-SH to cysteine sulfenic acid (C(P)-SOH), which then reacts with another cysteine residue, the resolving cysteine (C(R)), to form a disulfide bridge. The disulfide is subsequently reduced by an appropriate electron donor to complete the catalytic cycle. In this atypical 2-Cys peroxiredoxin, C(R) is present in the same subunit to form an intramolecular disulfide. The disulfide is subsequently reduced by thioredoxin.</text>
</comment>
<comment type="similarity">
    <text evidence="1">Belongs to the peroxiredoxin family. Tpx subfamily.</text>
</comment>
<name>TPX_MYCBO</name>
<dbReference type="EC" id="1.11.1.24" evidence="1"/>
<dbReference type="EMBL" id="LT708304">
    <property type="protein sequence ID" value="SIU00570.1"/>
    <property type="molecule type" value="Genomic_DNA"/>
</dbReference>
<dbReference type="RefSeq" id="NP_855617.1">
    <property type="nucleotide sequence ID" value="NC_002945.3"/>
</dbReference>
<dbReference type="RefSeq" id="WP_003409700.1">
    <property type="nucleotide sequence ID" value="NC_002945.4"/>
</dbReference>
<dbReference type="SMR" id="P66953"/>
<dbReference type="KEGG" id="mbo:BQ2027_MB1967"/>
<dbReference type="PATRIC" id="fig|233413.5.peg.2160"/>
<dbReference type="Proteomes" id="UP000001419">
    <property type="component" value="Chromosome"/>
</dbReference>
<dbReference type="GO" id="GO:0008379">
    <property type="term" value="F:thioredoxin peroxidase activity"/>
    <property type="evidence" value="ECO:0007669"/>
    <property type="project" value="UniProtKB-UniRule"/>
</dbReference>
<dbReference type="CDD" id="cd03014">
    <property type="entry name" value="PRX_Atyp2cys"/>
    <property type="match status" value="1"/>
</dbReference>
<dbReference type="FunFam" id="3.40.30.10:FF:000056">
    <property type="entry name" value="Thiol peroxidase"/>
    <property type="match status" value="1"/>
</dbReference>
<dbReference type="Gene3D" id="3.40.30.10">
    <property type="entry name" value="Glutaredoxin"/>
    <property type="match status" value="1"/>
</dbReference>
<dbReference type="HAMAP" id="MF_00269">
    <property type="entry name" value="Tpx"/>
    <property type="match status" value="1"/>
</dbReference>
<dbReference type="InterPro" id="IPR013740">
    <property type="entry name" value="Redoxin"/>
</dbReference>
<dbReference type="InterPro" id="IPR036249">
    <property type="entry name" value="Thioredoxin-like_sf"/>
</dbReference>
<dbReference type="InterPro" id="IPR013766">
    <property type="entry name" value="Thioredoxin_domain"/>
</dbReference>
<dbReference type="InterPro" id="IPR002065">
    <property type="entry name" value="TPX"/>
</dbReference>
<dbReference type="InterPro" id="IPR018219">
    <property type="entry name" value="Tpx_CS"/>
</dbReference>
<dbReference type="InterPro" id="IPR050455">
    <property type="entry name" value="Tpx_Peroxidase_subfamily"/>
</dbReference>
<dbReference type="NCBIfam" id="NF001808">
    <property type="entry name" value="PRK00522.1"/>
    <property type="match status" value="1"/>
</dbReference>
<dbReference type="PANTHER" id="PTHR43110">
    <property type="entry name" value="THIOL PEROXIDASE"/>
    <property type="match status" value="1"/>
</dbReference>
<dbReference type="PANTHER" id="PTHR43110:SF1">
    <property type="entry name" value="THIOL PEROXIDASE"/>
    <property type="match status" value="1"/>
</dbReference>
<dbReference type="Pfam" id="PF08534">
    <property type="entry name" value="Redoxin"/>
    <property type="match status" value="1"/>
</dbReference>
<dbReference type="SUPFAM" id="SSF52833">
    <property type="entry name" value="Thioredoxin-like"/>
    <property type="match status" value="1"/>
</dbReference>
<dbReference type="PROSITE" id="PS51352">
    <property type="entry name" value="THIOREDOXIN_2"/>
    <property type="match status" value="1"/>
</dbReference>
<dbReference type="PROSITE" id="PS01265">
    <property type="entry name" value="TPX"/>
    <property type="match status" value="1"/>
</dbReference>
<proteinExistence type="evidence at protein level"/>
<accession>P66953</accession>
<accession>A0A1R3XZR6</accession>
<accession>P95282</accession>
<accession>X2BJP5</accession>